<sequence>MISTVALFWALFLVCVINMARYFSSLRALLVVLRGCDPLLYQYVDGGGFFTAHGQPSKQIRLVWYIYWQRYLDHHDDEFIRRCERVRRQFILTSALCGLVIISLIGLMIWH</sequence>
<gene>
    <name evidence="1" type="primary">uspB</name>
    <name type="ordered locus">ESA_04227</name>
</gene>
<proteinExistence type="inferred from homology"/>
<reference key="1">
    <citation type="journal article" date="2010" name="PLoS ONE">
        <title>Genome sequence of Cronobacter sakazakii BAA-894 and comparative genomic hybridization analysis with other Cronobacter species.</title>
        <authorList>
            <person name="Kucerova E."/>
            <person name="Clifton S.W."/>
            <person name="Xia X.Q."/>
            <person name="Long F."/>
            <person name="Porwollik S."/>
            <person name="Fulton L."/>
            <person name="Fronick C."/>
            <person name="Minx P."/>
            <person name="Kyung K."/>
            <person name="Warren W."/>
            <person name="Fulton R."/>
            <person name="Feng D."/>
            <person name="Wollam A."/>
            <person name="Shah N."/>
            <person name="Bhonagiri V."/>
            <person name="Nash W.E."/>
            <person name="Hallsworth-Pepin K."/>
            <person name="Wilson R.K."/>
            <person name="McClelland M."/>
            <person name="Forsythe S.J."/>
        </authorList>
    </citation>
    <scope>NUCLEOTIDE SEQUENCE [LARGE SCALE GENOMIC DNA]</scope>
    <source>
        <strain>ATCC BAA-894</strain>
    </source>
</reference>
<name>USPB_CROS8</name>
<protein>
    <recommendedName>
        <fullName evidence="1">Universal stress protein B</fullName>
    </recommendedName>
</protein>
<accession>A7MKM3</accession>
<organism>
    <name type="scientific">Cronobacter sakazakii (strain ATCC BAA-894)</name>
    <name type="common">Enterobacter sakazakii</name>
    <dbReference type="NCBI Taxonomy" id="290339"/>
    <lineage>
        <taxon>Bacteria</taxon>
        <taxon>Pseudomonadati</taxon>
        <taxon>Pseudomonadota</taxon>
        <taxon>Gammaproteobacteria</taxon>
        <taxon>Enterobacterales</taxon>
        <taxon>Enterobacteriaceae</taxon>
        <taxon>Cronobacter</taxon>
    </lineage>
</organism>
<comment type="subcellular location">
    <subcellularLocation>
        <location evidence="1">Cell inner membrane</location>
        <topology evidence="1">Multi-pass membrane protein</topology>
    </subcellularLocation>
</comment>
<comment type="similarity">
    <text evidence="1">Belongs to the universal stress protein B family.</text>
</comment>
<dbReference type="EMBL" id="CP000783">
    <property type="protein sequence ID" value="ABU79407.1"/>
    <property type="molecule type" value="Genomic_DNA"/>
</dbReference>
<dbReference type="RefSeq" id="WP_004388311.1">
    <property type="nucleotide sequence ID" value="NC_009778.1"/>
</dbReference>
<dbReference type="GeneID" id="45713765"/>
<dbReference type="KEGG" id="esa:ESA_04227"/>
<dbReference type="HOGENOM" id="CLU_151816_0_0_6"/>
<dbReference type="Proteomes" id="UP000000260">
    <property type="component" value="Chromosome"/>
</dbReference>
<dbReference type="GO" id="GO:0005886">
    <property type="term" value="C:plasma membrane"/>
    <property type="evidence" value="ECO:0007669"/>
    <property type="project" value="UniProtKB-SubCell"/>
</dbReference>
<dbReference type="HAMAP" id="MF_01088">
    <property type="entry name" value="UspB"/>
    <property type="match status" value="1"/>
</dbReference>
<dbReference type="InterPro" id="IPR019598">
    <property type="entry name" value="Universal_stress_protein_B"/>
</dbReference>
<dbReference type="NCBIfam" id="NF003435">
    <property type="entry name" value="PRK04960.1"/>
    <property type="match status" value="1"/>
</dbReference>
<dbReference type="Pfam" id="PF10625">
    <property type="entry name" value="UspB"/>
    <property type="match status" value="1"/>
</dbReference>
<evidence type="ECO:0000255" key="1">
    <source>
        <dbReference type="HAMAP-Rule" id="MF_01088"/>
    </source>
</evidence>
<keyword id="KW-0997">Cell inner membrane</keyword>
<keyword id="KW-1003">Cell membrane</keyword>
<keyword id="KW-0472">Membrane</keyword>
<keyword id="KW-1185">Reference proteome</keyword>
<keyword id="KW-0812">Transmembrane</keyword>
<keyword id="KW-1133">Transmembrane helix</keyword>
<feature type="chain" id="PRO_1000064877" description="Universal stress protein B">
    <location>
        <begin position="1"/>
        <end position="111"/>
    </location>
</feature>
<feature type="transmembrane region" description="Helical" evidence="1">
    <location>
        <begin position="1"/>
        <end position="21"/>
    </location>
</feature>
<feature type="transmembrane region" description="Helical" evidence="1">
    <location>
        <begin position="90"/>
        <end position="110"/>
    </location>
</feature>